<comment type="function">
    <text evidence="1">Regulator of protein phosphatase 1 (PP1) required for neural tube and optic fissure closure, and enteric neural crest cell (ENCCs) migration during development. Acts as an activator of PP1. During neural tube closure, localizes to the ventral neural tube and activates PP1, leading to down-regulate cell proliferation within cranial neural tissue and the neural retina. Also acts as a regulator of migration of enteric neural crest cells (ENCCs) by activating PP1, leading to repression of the integrin signaling through the rho/rock pathway (By similarity).</text>
</comment>
<comment type="subunit">
    <text evidence="1">Binds ppp1ca and actin.</text>
</comment>
<comment type="subcellular location">
    <subcellularLocation>
        <location evidence="1">Cytoplasm</location>
    </subcellularLocation>
    <subcellularLocation>
        <location evidence="1">Cell projection</location>
        <location evidence="1">Lamellipodium</location>
    </subcellularLocation>
</comment>
<comment type="similarity">
    <text evidence="3">Belongs to the phosphatase and actin regulator family.</text>
</comment>
<gene>
    <name type="primary">phactr4a</name>
</gene>
<evidence type="ECO:0000250" key="1"/>
<evidence type="ECO:0000256" key="2">
    <source>
        <dbReference type="SAM" id="MobiDB-lite"/>
    </source>
</evidence>
<evidence type="ECO:0000305" key="3"/>
<keyword id="KW-0009">Actin-binding</keyword>
<keyword id="KW-0966">Cell projection</keyword>
<keyword id="KW-0963">Cytoplasm</keyword>
<keyword id="KW-0217">Developmental protein</keyword>
<keyword id="KW-0524">Neurogenesis</keyword>
<keyword id="KW-1185">Reference proteome</keyword>
<keyword id="KW-0677">Repeat</keyword>
<feature type="chain" id="PRO_0000416890" description="Phosphatase and actin regulator 4A">
    <location>
        <begin position="1"/>
        <end position="725"/>
    </location>
</feature>
<feature type="repeat" description="RPEL 1">
    <location>
        <begin position="75"/>
        <end position="100"/>
    </location>
</feature>
<feature type="repeat" description="RPEL 2">
    <location>
        <begin position="606"/>
        <end position="631"/>
    </location>
</feature>
<feature type="repeat" description="RPEL 3">
    <location>
        <begin position="644"/>
        <end position="669"/>
    </location>
</feature>
<feature type="region of interest" description="Disordered" evidence="2">
    <location>
        <begin position="1"/>
        <end position="597"/>
    </location>
</feature>
<feature type="compositionally biased region" description="Polar residues" evidence="2">
    <location>
        <begin position="1"/>
        <end position="12"/>
    </location>
</feature>
<feature type="compositionally biased region" description="Basic residues" evidence="2">
    <location>
        <begin position="55"/>
        <end position="64"/>
    </location>
</feature>
<feature type="compositionally biased region" description="Basic and acidic residues" evidence="2">
    <location>
        <begin position="65"/>
        <end position="100"/>
    </location>
</feature>
<feature type="compositionally biased region" description="Basic and acidic residues" evidence="2">
    <location>
        <begin position="124"/>
        <end position="147"/>
    </location>
</feature>
<feature type="compositionally biased region" description="Basic and acidic residues" evidence="2">
    <location>
        <begin position="155"/>
        <end position="164"/>
    </location>
</feature>
<feature type="compositionally biased region" description="Polar residues" evidence="2">
    <location>
        <begin position="166"/>
        <end position="177"/>
    </location>
</feature>
<feature type="compositionally biased region" description="Low complexity" evidence="2">
    <location>
        <begin position="212"/>
        <end position="221"/>
    </location>
</feature>
<feature type="compositionally biased region" description="Pro residues" evidence="2">
    <location>
        <begin position="222"/>
        <end position="235"/>
    </location>
</feature>
<feature type="compositionally biased region" description="Low complexity" evidence="2">
    <location>
        <begin position="265"/>
        <end position="276"/>
    </location>
</feature>
<feature type="compositionally biased region" description="Low complexity" evidence="2">
    <location>
        <begin position="292"/>
        <end position="313"/>
    </location>
</feature>
<feature type="compositionally biased region" description="Polar residues" evidence="2">
    <location>
        <begin position="359"/>
        <end position="368"/>
    </location>
</feature>
<feature type="compositionally biased region" description="Pro residues" evidence="2">
    <location>
        <begin position="374"/>
        <end position="384"/>
    </location>
</feature>
<feature type="compositionally biased region" description="Low complexity" evidence="2">
    <location>
        <begin position="385"/>
        <end position="401"/>
    </location>
</feature>
<feature type="compositionally biased region" description="Pro residues" evidence="2">
    <location>
        <begin position="402"/>
        <end position="417"/>
    </location>
</feature>
<feature type="compositionally biased region" description="Basic and acidic residues" evidence="2">
    <location>
        <begin position="497"/>
        <end position="510"/>
    </location>
</feature>
<feature type="compositionally biased region" description="Acidic residues" evidence="2">
    <location>
        <begin position="522"/>
        <end position="536"/>
    </location>
</feature>
<feature type="compositionally biased region" description="Acidic residues" evidence="2">
    <location>
        <begin position="545"/>
        <end position="554"/>
    </location>
</feature>
<feature type="compositionally biased region" description="Basic and acidic residues" evidence="2">
    <location>
        <begin position="567"/>
        <end position="585"/>
    </location>
</feature>
<proteinExistence type="inferred from homology"/>
<protein>
    <recommendedName>
        <fullName>Phosphatase and actin regulator 4A</fullName>
    </recommendedName>
</protein>
<organism>
    <name type="scientific">Danio rerio</name>
    <name type="common">Zebrafish</name>
    <name type="synonym">Brachydanio rerio</name>
    <dbReference type="NCBI Taxonomy" id="7955"/>
    <lineage>
        <taxon>Eukaryota</taxon>
        <taxon>Metazoa</taxon>
        <taxon>Chordata</taxon>
        <taxon>Craniata</taxon>
        <taxon>Vertebrata</taxon>
        <taxon>Euteleostomi</taxon>
        <taxon>Actinopterygii</taxon>
        <taxon>Neopterygii</taxon>
        <taxon>Teleostei</taxon>
        <taxon>Ostariophysi</taxon>
        <taxon>Cypriniformes</taxon>
        <taxon>Danionidae</taxon>
        <taxon>Danioninae</taxon>
        <taxon>Danio</taxon>
    </lineage>
</organism>
<dbReference type="EMBL" id="AL954687">
    <property type="status" value="NOT_ANNOTATED_CDS"/>
    <property type="molecule type" value="Genomic_DNA"/>
</dbReference>
<dbReference type="SMR" id="F1QIC4"/>
<dbReference type="STRING" id="7955.ENSDARP00000145209"/>
<dbReference type="AGR" id="ZFIN:ZDB-GENE-051030-69"/>
<dbReference type="ZFIN" id="ZDB-GENE-051030-69">
    <property type="gene designation" value="phactr4a"/>
</dbReference>
<dbReference type="eggNOG" id="KOG4339">
    <property type="taxonomic scope" value="Eukaryota"/>
</dbReference>
<dbReference type="InParanoid" id="F1QIC4"/>
<dbReference type="PRO" id="PR:F1QIC4"/>
<dbReference type="Proteomes" id="UP000000437">
    <property type="component" value="Unplaced"/>
</dbReference>
<dbReference type="GO" id="GO:0005737">
    <property type="term" value="C:cytoplasm"/>
    <property type="evidence" value="ECO:0007669"/>
    <property type="project" value="UniProtKB-SubCell"/>
</dbReference>
<dbReference type="GO" id="GO:0030027">
    <property type="term" value="C:lamellipodium"/>
    <property type="evidence" value="ECO:0000250"/>
    <property type="project" value="UniProtKB"/>
</dbReference>
<dbReference type="GO" id="GO:0003779">
    <property type="term" value="F:actin binding"/>
    <property type="evidence" value="ECO:0000250"/>
    <property type="project" value="UniProtKB"/>
</dbReference>
<dbReference type="GO" id="GO:0008157">
    <property type="term" value="F:protein phosphatase 1 binding"/>
    <property type="evidence" value="ECO:0000250"/>
    <property type="project" value="UniProtKB"/>
</dbReference>
<dbReference type="GO" id="GO:0072542">
    <property type="term" value="F:protein phosphatase activator activity"/>
    <property type="evidence" value="ECO:0000250"/>
    <property type="project" value="UniProtKB"/>
</dbReference>
<dbReference type="GO" id="GO:0030036">
    <property type="term" value="P:actin cytoskeleton organization"/>
    <property type="evidence" value="ECO:0000250"/>
    <property type="project" value="UniProtKB"/>
</dbReference>
<dbReference type="GO" id="GO:0061386">
    <property type="term" value="P:closure of optic fissure"/>
    <property type="evidence" value="ECO:0000250"/>
    <property type="project" value="UniProtKB"/>
</dbReference>
<dbReference type="GO" id="GO:0048484">
    <property type="term" value="P:enteric nervous system development"/>
    <property type="evidence" value="ECO:0000250"/>
    <property type="project" value="UniProtKB"/>
</dbReference>
<dbReference type="GO" id="GO:2001045">
    <property type="term" value="P:negative regulation of integrin-mediated signaling pathway"/>
    <property type="evidence" value="ECO:0000250"/>
    <property type="project" value="UniProtKB"/>
</dbReference>
<dbReference type="GO" id="GO:0001755">
    <property type="term" value="P:neural crest cell migration"/>
    <property type="evidence" value="ECO:0000250"/>
    <property type="project" value="UniProtKB"/>
</dbReference>
<dbReference type="GO" id="GO:0001843">
    <property type="term" value="P:neural tube closure"/>
    <property type="evidence" value="ECO:0000250"/>
    <property type="project" value="UniProtKB"/>
</dbReference>
<dbReference type="GO" id="GO:0043085">
    <property type="term" value="P:positive regulation of catalytic activity"/>
    <property type="evidence" value="ECO:0000250"/>
    <property type="project" value="UniProtKB"/>
</dbReference>
<dbReference type="GO" id="GO:0051726">
    <property type="term" value="P:regulation of cell cycle"/>
    <property type="evidence" value="ECO:0000250"/>
    <property type="project" value="UniProtKB"/>
</dbReference>
<dbReference type="GO" id="GO:0007266">
    <property type="term" value="P:Rho protein signal transduction"/>
    <property type="evidence" value="ECO:0000250"/>
    <property type="project" value="UniProtKB"/>
</dbReference>
<dbReference type="Gene3D" id="6.10.140.1750">
    <property type="match status" value="1"/>
</dbReference>
<dbReference type="Gene3D" id="6.10.140.2130">
    <property type="match status" value="1"/>
</dbReference>
<dbReference type="InterPro" id="IPR004018">
    <property type="entry name" value="RPEL_repeat"/>
</dbReference>
<dbReference type="PANTHER" id="PTHR12751:SF4">
    <property type="entry name" value="PHOSPHATASE AND ACTIN REGULATOR 4"/>
    <property type="match status" value="1"/>
</dbReference>
<dbReference type="PANTHER" id="PTHR12751">
    <property type="entry name" value="PHOSPHATASE AND ACTIN REGULATOR PHACTR"/>
    <property type="match status" value="1"/>
</dbReference>
<dbReference type="Pfam" id="PF02755">
    <property type="entry name" value="RPEL"/>
    <property type="match status" value="3"/>
</dbReference>
<dbReference type="SMART" id="SM00707">
    <property type="entry name" value="RPEL"/>
    <property type="match status" value="3"/>
</dbReference>
<dbReference type="PROSITE" id="PS51073">
    <property type="entry name" value="RPEL"/>
    <property type="match status" value="3"/>
</dbReference>
<reference key="1">
    <citation type="journal article" date="2013" name="Nature">
        <title>The zebrafish reference genome sequence and its relationship to the human genome.</title>
        <authorList>
            <person name="Howe K."/>
            <person name="Clark M.D."/>
            <person name="Torroja C.F."/>
            <person name="Torrance J."/>
            <person name="Berthelot C."/>
            <person name="Muffato M."/>
            <person name="Collins J.E."/>
            <person name="Humphray S."/>
            <person name="McLaren K."/>
            <person name="Matthews L."/>
            <person name="McLaren S."/>
            <person name="Sealy I."/>
            <person name="Caccamo M."/>
            <person name="Churcher C."/>
            <person name="Scott C."/>
            <person name="Barrett J.C."/>
            <person name="Koch R."/>
            <person name="Rauch G.J."/>
            <person name="White S."/>
            <person name="Chow W."/>
            <person name="Kilian B."/>
            <person name="Quintais L.T."/>
            <person name="Guerra-Assuncao J.A."/>
            <person name="Zhou Y."/>
            <person name="Gu Y."/>
            <person name="Yen J."/>
            <person name="Vogel J.H."/>
            <person name="Eyre T."/>
            <person name="Redmond S."/>
            <person name="Banerjee R."/>
            <person name="Chi J."/>
            <person name="Fu B."/>
            <person name="Langley E."/>
            <person name="Maguire S.F."/>
            <person name="Laird G.K."/>
            <person name="Lloyd D."/>
            <person name="Kenyon E."/>
            <person name="Donaldson S."/>
            <person name="Sehra H."/>
            <person name="Almeida-King J."/>
            <person name="Loveland J."/>
            <person name="Trevanion S."/>
            <person name="Jones M."/>
            <person name="Quail M."/>
            <person name="Willey D."/>
            <person name="Hunt A."/>
            <person name="Burton J."/>
            <person name="Sims S."/>
            <person name="McLay K."/>
            <person name="Plumb B."/>
            <person name="Davis J."/>
            <person name="Clee C."/>
            <person name="Oliver K."/>
            <person name="Clark R."/>
            <person name="Riddle C."/>
            <person name="Elliot D."/>
            <person name="Threadgold G."/>
            <person name="Harden G."/>
            <person name="Ware D."/>
            <person name="Begum S."/>
            <person name="Mortimore B."/>
            <person name="Kerry G."/>
            <person name="Heath P."/>
            <person name="Phillimore B."/>
            <person name="Tracey A."/>
            <person name="Corby N."/>
            <person name="Dunn M."/>
            <person name="Johnson C."/>
            <person name="Wood J."/>
            <person name="Clark S."/>
            <person name="Pelan S."/>
            <person name="Griffiths G."/>
            <person name="Smith M."/>
            <person name="Glithero R."/>
            <person name="Howden P."/>
            <person name="Barker N."/>
            <person name="Lloyd C."/>
            <person name="Stevens C."/>
            <person name="Harley J."/>
            <person name="Holt K."/>
            <person name="Panagiotidis G."/>
            <person name="Lovell J."/>
            <person name="Beasley H."/>
            <person name="Henderson C."/>
            <person name="Gordon D."/>
            <person name="Auger K."/>
            <person name="Wright D."/>
            <person name="Collins J."/>
            <person name="Raisen C."/>
            <person name="Dyer L."/>
            <person name="Leung K."/>
            <person name="Robertson L."/>
            <person name="Ambridge K."/>
            <person name="Leongamornlert D."/>
            <person name="McGuire S."/>
            <person name="Gilderthorp R."/>
            <person name="Griffiths C."/>
            <person name="Manthravadi D."/>
            <person name="Nichol S."/>
            <person name="Barker G."/>
            <person name="Whitehead S."/>
            <person name="Kay M."/>
            <person name="Brown J."/>
            <person name="Murnane C."/>
            <person name="Gray E."/>
            <person name="Humphries M."/>
            <person name="Sycamore N."/>
            <person name="Barker D."/>
            <person name="Saunders D."/>
            <person name="Wallis J."/>
            <person name="Babbage A."/>
            <person name="Hammond S."/>
            <person name="Mashreghi-Mohammadi M."/>
            <person name="Barr L."/>
            <person name="Martin S."/>
            <person name="Wray P."/>
            <person name="Ellington A."/>
            <person name="Matthews N."/>
            <person name="Ellwood M."/>
            <person name="Woodmansey R."/>
            <person name="Clark G."/>
            <person name="Cooper J."/>
            <person name="Tromans A."/>
            <person name="Grafham D."/>
            <person name="Skuce C."/>
            <person name="Pandian R."/>
            <person name="Andrews R."/>
            <person name="Harrison E."/>
            <person name="Kimberley A."/>
            <person name="Garnett J."/>
            <person name="Fosker N."/>
            <person name="Hall R."/>
            <person name="Garner P."/>
            <person name="Kelly D."/>
            <person name="Bird C."/>
            <person name="Palmer S."/>
            <person name="Gehring I."/>
            <person name="Berger A."/>
            <person name="Dooley C.M."/>
            <person name="Ersan-Urun Z."/>
            <person name="Eser C."/>
            <person name="Geiger H."/>
            <person name="Geisler M."/>
            <person name="Karotki L."/>
            <person name="Kirn A."/>
            <person name="Konantz J."/>
            <person name="Konantz M."/>
            <person name="Oberlander M."/>
            <person name="Rudolph-Geiger S."/>
            <person name="Teucke M."/>
            <person name="Lanz C."/>
            <person name="Raddatz G."/>
            <person name="Osoegawa K."/>
            <person name="Zhu B."/>
            <person name="Rapp A."/>
            <person name="Widaa S."/>
            <person name="Langford C."/>
            <person name="Yang F."/>
            <person name="Schuster S.C."/>
            <person name="Carter N.P."/>
            <person name="Harrow J."/>
            <person name="Ning Z."/>
            <person name="Herrero J."/>
            <person name="Searle S.M."/>
            <person name="Enright A."/>
            <person name="Geisler R."/>
            <person name="Plasterk R.H."/>
            <person name="Lee C."/>
            <person name="Westerfield M."/>
            <person name="de Jong P.J."/>
            <person name="Zon L.I."/>
            <person name="Postlethwait J.H."/>
            <person name="Nusslein-Volhard C."/>
            <person name="Hubbard T.J."/>
            <person name="Roest Crollius H."/>
            <person name="Rogers J."/>
            <person name="Stemple D.L."/>
        </authorList>
    </citation>
    <scope>NUCLEOTIDE SEQUENCE [LARGE SCALE GENOMIC DNA]</scope>
    <source>
        <strain>Tuebingen</strain>
    </source>
</reference>
<sequence>MGQGASTQTLNPNLAYITDDEVDHSMPESDGANPGAGNPSAKSKGKFPSLGKIFKPWKWRKKKTSDKFKETSEGLVLERKMSVRKPREELIERGLLKDIPENESNDVNHKAPPVKNGHTGPVPGDRKSDSGSEIDQDRRMDDTGERKEKRKRIGKRNDGTERMTEMIQSFQKMSLMQRSVGVQFVPEPKPASTSTKESQPPPKQAILPPKRVIAAPSSAEPAPVPPPPIAKPPPRTVSLNVDDSSRTILIPSLIAGDREVPPTVPAHTTPATVSTHKTLPTVPAHMTPPTVPAHVTTPAAPAHSNPPAVLLKQPPMPPPKPVHHSSNTALQGLDLSTVDPSQVPVPVKRSPPIPPKRNTPVTKRNSGDSSANLPEPPPPAPTSVPIPAAAPISAPPSTQSDPPSPTTEPPSQPPPLPLHIRIQRALNSPGPVHPNPEGSQRAHSLLFETPPDLINEALGGGRYSLPVTIEPLRLPEDDDFDMEEELQKLRAGPRPTQKPELEPRSRRGLVEDPQVAVIPEDAGSESSEEEEDESDSDQSIKYRDDNEEDDDEEDVPKSGLASRVKRKDTLALKLERQQEKEKSQEEDSSTWNNKEQWEAVRNKIGTALTRRLSQRPTAQELEQRNILLAKNEEVRRAERSEIKRRLTRKLSQRPTIADLQARKILRFHEYVESTHAQDYDRRADKPWTKLTPADKAAIRKELNEFKSSEMEVHEESRIFTRFHRP</sequence>
<accession>F1QIC4</accession>
<name>PHR4A_DANRE</name>